<gene>
    <name type="primary">CYB5A</name>
    <name type="synonym">CYB5</name>
</gene>
<feature type="initiator methionine" description="Removed" evidence="5 6 7">
    <location>
        <position position="1"/>
    </location>
</feature>
<feature type="chain" id="PRO_0000166008" description="Cytochrome b5">
    <location>
        <begin position="2"/>
        <end position="134"/>
    </location>
</feature>
<feature type="transmembrane region" description="Helical" evidence="2">
    <location>
        <begin position="109"/>
        <end position="131"/>
    </location>
</feature>
<feature type="domain" description="Cytochrome b5 heme-binding" evidence="3">
    <location>
        <begin position="9"/>
        <end position="85"/>
    </location>
</feature>
<feature type="binding site" description="axial binding residue" evidence="3 4">
    <location>
        <position position="44"/>
    </location>
    <ligand>
        <name>heme</name>
        <dbReference type="ChEBI" id="CHEBI:30413"/>
    </ligand>
    <ligandPart>
        <name>Fe</name>
        <dbReference type="ChEBI" id="CHEBI:18248"/>
    </ligandPart>
</feature>
<feature type="binding site" description="axial binding residue" evidence="3 4">
    <location>
        <position position="68"/>
    </location>
    <ligand>
        <name>heme</name>
        <dbReference type="ChEBI" id="CHEBI:30413"/>
    </ligand>
    <ligandPart>
        <name>Fe</name>
        <dbReference type="ChEBI" id="CHEBI:18248"/>
    </ligandPart>
</feature>
<feature type="modified residue" description="N-acetylalanine" evidence="5 6">
    <location>
        <position position="2"/>
    </location>
</feature>
<feature type="modified residue" description="N6-acetyllysine" evidence="1">
    <location>
        <position position="7"/>
    </location>
</feature>
<feature type="modified residue" description="N6-acetyllysine" evidence="1">
    <location>
        <position position="10"/>
    </location>
</feature>
<feature type="modified residue" description="N6-acetyllysine" evidence="1">
    <location>
        <position position="19"/>
    </location>
</feature>
<feature type="sequence conflict" description="In Ref. 5; AA sequence." evidence="8" ref="5">
    <original>AEES</original>
    <variation>ZSZZBA</variation>
    <location>
        <begin position="2"/>
        <end position="5"/>
    </location>
</feature>
<feature type="sequence conflict" description="In Ref. 7; AA sequence." evidence="8" ref="7">
    <original>EIQ</original>
    <variation>QIE</variation>
    <location>
        <begin position="16"/>
        <end position="18"/>
    </location>
</feature>
<feature type="sequence conflict" description="In Ref. 8; AA sequence." evidence="8" ref="8">
    <original>Q</original>
    <variation>E</variation>
    <location>
        <position position="18"/>
    </location>
</feature>
<feature type="sequence conflict" description="In Ref. 7; AA sequence and 8; AA sequence." evidence="8" ref="7 8">
    <original>N</original>
    <variation>D</variation>
    <location>
        <position position="62"/>
    </location>
</feature>
<feature type="sequence conflict" description="In Ref. 5; AA sequence." evidence="8" ref="5">
    <original>N</original>
    <variation>D</variation>
    <location>
        <position position="134"/>
    </location>
</feature>
<feature type="strand" evidence="12">
    <location>
        <begin position="9"/>
        <end position="12"/>
    </location>
</feature>
<feature type="helix" evidence="9">
    <location>
        <begin position="14"/>
        <end position="17"/>
    </location>
</feature>
<feature type="strand" evidence="11">
    <location>
        <begin position="21"/>
        <end position="24"/>
    </location>
</feature>
<feature type="strand" evidence="9">
    <location>
        <begin position="25"/>
        <end position="30"/>
    </location>
</feature>
<feature type="strand" evidence="9">
    <location>
        <begin position="33"/>
        <end position="36"/>
    </location>
</feature>
<feature type="turn" evidence="9">
    <location>
        <begin position="38"/>
        <end position="43"/>
    </location>
</feature>
<feature type="helix" evidence="9">
    <location>
        <begin position="49"/>
        <end position="54"/>
    </location>
</feature>
<feature type="strand" evidence="10">
    <location>
        <begin position="56"/>
        <end position="58"/>
    </location>
</feature>
<feature type="helix" evidence="9">
    <location>
        <begin position="60"/>
        <end position="65"/>
    </location>
</feature>
<feature type="helix" evidence="9">
    <location>
        <begin position="70"/>
        <end position="76"/>
    </location>
</feature>
<feature type="turn" evidence="9">
    <location>
        <begin position="77"/>
        <end position="79"/>
    </location>
</feature>
<feature type="strand" evidence="9">
    <location>
        <begin position="80"/>
        <end position="84"/>
    </location>
</feature>
<feature type="helix" evidence="9">
    <location>
        <begin position="86"/>
        <end position="91"/>
    </location>
</feature>
<dbReference type="EMBL" id="X13617">
    <property type="protein sequence ID" value="CAA31949.1"/>
    <property type="molecule type" value="mRNA"/>
</dbReference>
<dbReference type="EMBL" id="M63328">
    <property type="protein sequence ID" value="AAC14455.1"/>
    <property type="status" value="ALT_SEQ"/>
    <property type="molecule type" value="Genomic_DNA"/>
</dbReference>
<dbReference type="EMBL" id="M63326">
    <property type="protein sequence ID" value="AAC14455.1"/>
    <property type="status" value="JOINED"/>
    <property type="molecule type" value="Genomic_DNA"/>
</dbReference>
<dbReference type="EMBL" id="M63327">
    <property type="protein sequence ID" value="AAC14455.1"/>
    <property type="status" value="JOINED"/>
    <property type="molecule type" value="Genomic_DNA"/>
</dbReference>
<dbReference type="EMBL" id="L22966">
    <property type="status" value="NOT_ANNOTATED_CDS"/>
    <property type="molecule type" value="Genomic_DNA"/>
</dbReference>
<dbReference type="EMBL" id="BC108113">
    <property type="protein sequence ID" value="AAI08114.1"/>
    <property type="molecule type" value="mRNA"/>
</dbReference>
<dbReference type="PIR" id="A47215">
    <property type="entry name" value="CBBO5"/>
</dbReference>
<dbReference type="RefSeq" id="NP_776458.1">
    <property type="nucleotide sequence ID" value="NM_174033.3"/>
</dbReference>
<dbReference type="PDB" id="1CYO">
    <property type="method" value="X-ray"/>
    <property type="resolution" value="1.50 A"/>
    <property type="chains" value="A=6-98"/>
</dbReference>
<dbReference type="PDB" id="1EHB">
    <property type="method" value="X-ray"/>
    <property type="resolution" value="1.90 A"/>
    <property type="chains" value="A=8-89"/>
</dbReference>
<dbReference type="PDB" id="1ES1">
    <property type="method" value="X-ray"/>
    <property type="resolution" value="2.10 A"/>
    <property type="chains" value="A=8-89"/>
</dbReference>
<dbReference type="PDB" id="1F03">
    <property type="method" value="NMR"/>
    <property type="chains" value="A=8-89"/>
</dbReference>
<dbReference type="PDB" id="1F04">
    <property type="method" value="NMR"/>
    <property type="chains" value="A=8-89"/>
</dbReference>
<dbReference type="PDB" id="1HKO">
    <property type="method" value="NMR"/>
    <property type="chains" value="A=2-105"/>
</dbReference>
<dbReference type="PDB" id="1I5U">
    <property type="method" value="NMR"/>
    <property type="chains" value="A=8-89"/>
</dbReference>
<dbReference type="PDB" id="1J0Q">
    <property type="method" value="NMR"/>
    <property type="chains" value="A=8-89"/>
</dbReference>
<dbReference type="PDB" id="1LQX">
    <property type="method" value="X-ray"/>
    <property type="resolution" value="1.80 A"/>
    <property type="chains" value="A=8-89"/>
</dbReference>
<dbReference type="PDB" id="1LR6">
    <property type="method" value="X-ray"/>
    <property type="resolution" value="1.90 A"/>
    <property type="chains" value="A=8-89"/>
</dbReference>
<dbReference type="PDB" id="1M20">
    <property type="method" value="X-ray"/>
    <property type="resolution" value="1.80 A"/>
    <property type="chains" value="A=8-89"/>
</dbReference>
<dbReference type="PDB" id="1M2I">
    <property type="method" value="X-ray"/>
    <property type="resolution" value="1.80 A"/>
    <property type="chains" value="A=8-89"/>
</dbReference>
<dbReference type="PDB" id="1M2M">
    <property type="method" value="X-ray"/>
    <property type="resolution" value="1.80 A"/>
    <property type="chains" value="A=8-89"/>
</dbReference>
<dbReference type="PDB" id="1M59">
    <property type="method" value="X-ray"/>
    <property type="resolution" value="1.90 A"/>
    <property type="chains" value="A=8-89"/>
</dbReference>
<dbReference type="PDB" id="1NX7">
    <property type="method" value="NMR"/>
    <property type="chains" value="A=8-89"/>
</dbReference>
<dbReference type="PDB" id="1SH4">
    <property type="method" value="NMR"/>
    <property type="chains" value="A=8-89"/>
</dbReference>
<dbReference type="PDB" id="1U9M">
    <property type="method" value="X-ray"/>
    <property type="resolution" value="2.00 A"/>
    <property type="chains" value="A/B/C/D/E/F=8-89"/>
</dbReference>
<dbReference type="PDB" id="1U9U">
    <property type="method" value="X-ray"/>
    <property type="resolution" value="1.86 A"/>
    <property type="chains" value="A=8-89"/>
</dbReference>
<dbReference type="PDB" id="3OZZ">
    <property type="method" value="X-ray"/>
    <property type="resolution" value="1.70 A"/>
    <property type="chains" value="B=8-89"/>
</dbReference>
<dbReference type="PDB" id="4HIN">
    <property type="method" value="X-ray"/>
    <property type="resolution" value="2.40 A"/>
    <property type="chains" value="A/B/C/D=8-89"/>
</dbReference>
<dbReference type="PDBsum" id="1CYO"/>
<dbReference type="PDBsum" id="1EHB"/>
<dbReference type="PDBsum" id="1ES1"/>
<dbReference type="PDBsum" id="1F03"/>
<dbReference type="PDBsum" id="1F04"/>
<dbReference type="PDBsum" id="1HKO"/>
<dbReference type="PDBsum" id="1I5U"/>
<dbReference type="PDBsum" id="1J0Q"/>
<dbReference type="PDBsum" id="1LQX"/>
<dbReference type="PDBsum" id="1LR6"/>
<dbReference type="PDBsum" id="1M20"/>
<dbReference type="PDBsum" id="1M2I"/>
<dbReference type="PDBsum" id="1M2M"/>
<dbReference type="PDBsum" id="1M59"/>
<dbReference type="PDBsum" id="1NX7"/>
<dbReference type="PDBsum" id="1SH4"/>
<dbReference type="PDBsum" id="1U9M"/>
<dbReference type="PDBsum" id="1U9U"/>
<dbReference type="PDBsum" id="3OZZ"/>
<dbReference type="PDBsum" id="4HIN"/>
<dbReference type="BMRB" id="P00171"/>
<dbReference type="SMR" id="P00171"/>
<dbReference type="FunCoup" id="P00171">
    <property type="interactions" value="2716"/>
</dbReference>
<dbReference type="STRING" id="9913.ENSBTAP00000067864"/>
<dbReference type="iPTMnet" id="P00171"/>
<dbReference type="PaxDb" id="9913-ENSBTAP00000015944"/>
<dbReference type="PeptideAtlas" id="P00171"/>
<dbReference type="Ensembl" id="ENSBTAT00000072295.1">
    <property type="protein sequence ID" value="ENSBTAP00000067864.1"/>
    <property type="gene ID" value="ENSBTAG00000012012.7"/>
</dbReference>
<dbReference type="GeneID" id="281110"/>
<dbReference type="KEGG" id="bta:281110"/>
<dbReference type="CTD" id="1528"/>
<dbReference type="VEuPathDB" id="HostDB:ENSBTAG00000012012"/>
<dbReference type="VGNC" id="VGNC:50260">
    <property type="gene designation" value="CYB5A"/>
</dbReference>
<dbReference type="eggNOG" id="KOG0537">
    <property type="taxonomic scope" value="Eukaryota"/>
</dbReference>
<dbReference type="GeneTree" id="ENSGT00940000156770"/>
<dbReference type="HOGENOM" id="CLU_102602_3_3_1"/>
<dbReference type="InParanoid" id="P00171"/>
<dbReference type="OMA" id="FMFEHKS"/>
<dbReference type="OrthoDB" id="260519at2759"/>
<dbReference type="TreeFam" id="TF314537"/>
<dbReference type="Reactome" id="R-BTA-196836">
    <property type="pathway name" value="Vitamin C (ascorbate) metabolism"/>
</dbReference>
<dbReference type="Reactome" id="R-BTA-9609523">
    <property type="pathway name" value="Insertion of tail-anchored proteins into the endoplasmic reticulum membrane"/>
</dbReference>
<dbReference type="SABIO-RK" id="P00171"/>
<dbReference type="EvolutionaryTrace" id="P00171"/>
<dbReference type="Proteomes" id="UP000009136">
    <property type="component" value="Chromosome 24"/>
</dbReference>
<dbReference type="Bgee" id="ENSBTAG00000012012">
    <property type="expression patterns" value="Expressed in liver and 103 other cell types or tissues"/>
</dbReference>
<dbReference type="GO" id="GO:0005789">
    <property type="term" value="C:endoplasmic reticulum membrane"/>
    <property type="evidence" value="ECO:0000318"/>
    <property type="project" value="GO_Central"/>
</dbReference>
<dbReference type="GO" id="GO:0043231">
    <property type="term" value="C:intracellular membrane-bounded organelle"/>
    <property type="evidence" value="ECO:0000318"/>
    <property type="project" value="GO_Central"/>
</dbReference>
<dbReference type="GO" id="GO:0020037">
    <property type="term" value="F:heme binding"/>
    <property type="evidence" value="ECO:0000318"/>
    <property type="project" value="GO_Central"/>
</dbReference>
<dbReference type="GO" id="GO:0046872">
    <property type="term" value="F:metal ion binding"/>
    <property type="evidence" value="ECO:0007669"/>
    <property type="project" value="UniProtKB-KW"/>
</dbReference>
<dbReference type="FunFam" id="3.10.120.10:FF:000002">
    <property type="entry name" value="Cytochrome b5 type B"/>
    <property type="match status" value="1"/>
</dbReference>
<dbReference type="Gene3D" id="3.10.120.10">
    <property type="entry name" value="Cytochrome b5-like heme/steroid binding domain"/>
    <property type="match status" value="1"/>
</dbReference>
<dbReference type="InterPro" id="IPR001199">
    <property type="entry name" value="Cyt_B5-like_heme/steroid-bd"/>
</dbReference>
<dbReference type="InterPro" id="IPR036400">
    <property type="entry name" value="Cyt_B5-like_heme/steroid_sf"/>
</dbReference>
<dbReference type="InterPro" id="IPR018506">
    <property type="entry name" value="Cyt_B5_heme-BS"/>
</dbReference>
<dbReference type="InterPro" id="IPR050668">
    <property type="entry name" value="Cytochrome_b5"/>
</dbReference>
<dbReference type="PANTHER" id="PTHR19359">
    <property type="entry name" value="CYTOCHROME B5"/>
    <property type="match status" value="1"/>
</dbReference>
<dbReference type="PANTHER" id="PTHR19359:SF154">
    <property type="entry name" value="CYTOCHROME B5"/>
    <property type="match status" value="1"/>
</dbReference>
<dbReference type="Pfam" id="PF00173">
    <property type="entry name" value="Cyt-b5"/>
    <property type="match status" value="1"/>
</dbReference>
<dbReference type="PRINTS" id="PR00363">
    <property type="entry name" value="CYTOCHROMEB5"/>
</dbReference>
<dbReference type="SMART" id="SM01117">
    <property type="entry name" value="Cyt-b5"/>
    <property type="match status" value="1"/>
</dbReference>
<dbReference type="SUPFAM" id="SSF55856">
    <property type="entry name" value="Cytochrome b5-like heme/steroid binding domain"/>
    <property type="match status" value="1"/>
</dbReference>
<dbReference type="PROSITE" id="PS00191">
    <property type="entry name" value="CYTOCHROME_B5_1"/>
    <property type="match status" value="1"/>
</dbReference>
<dbReference type="PROSITE" id="PS50255">
    <property type="entry name" value="CYTOCHROME_B5_2"/>
    <property type="match status" value="1"/>
</dbReference>
<keyword id="KW-0002">3D-structure</keyword>
<keyword id="KW-0007">Acetylation</keyword>
<keyword id="KW-0903">Direct protein sequencing</keyword>
<keyword id="KW-0249">Electron transport</keyword>
<keyword id="KW-0256">Endoplasmic reticulum</keyword>
<keyword id="KW-0349">Heme</keyword>
<keyword id="KW-0408">Iron</keyword>
<keyword id="KW-0472">Membrane</keyword>
<keyword id="KW-0479">Metal-binding</keyword>
<keyword id="KW-0492">Microsome</keyword>
<keyword id="KW-1185">Reference proteome</keyword>
<keyword id="KW-0812">Transmembrane</keyword>
<keyword id="KW-1133">Transmembrane helix</keyword>
<keyword id="KW-0813">Transport</keyword>
<sequence>MAEESSKAVKYYTLEEIQKHNNSKSTWLILHYKVYDLTKFLEEHPGGEEVLREQAGGDATENFEDVGHSTDARELSKTFIIGELHPDDRSKITKPSESIITTIDSNPSWWTNWLIPAISALFVALIYHLYTSEN</sequence>
<protein>
    <recommendedName>
        <fullName>Cytochrome b5</fullName>
    </recommendedName>
</protein>
<evidence type="ECO:0000250" key="1">
    <source>
        <dbReference type="UniProtKB" id="P56395"/>
    </source>
</evidence>
<evidence type="ECO:0000255" key="2"/>
<evidence type="ECO:0000255" key="3">
    <source>
        <dbReference type="PROSITE-ProRule" id="PRU00279"/>
    </source>
</evidence>
<evidence type="ECO:0000269" key="4">
    <source>
    </source>
</evidence>
<evidence type="ECO:0000269" key="5">
    <source>
    </source>
</evidence>
<evidence type="ECO:0000269" key="6">
    <source>
    </source>
</evidence>
<evidence type="ECO:0000269" key="7">
    <source>
    </source>
</evidence>
<evidence type="ECO:0000305" key="8"/>
<evidence type="ECO:0007829" key="9">
    <source>
        <dbReference type="PDB" id="1CYO"/>
    </source>
</evidence>
<evidence type="ECO:0007829" key="10">
    <source>
        <dbReference type="PDB" id="1HKO"/>
    </source>
</evidence>
<evidence type="ECO:0007829" key="11">
    <source>
        <dbReference type="PDB" id="1M20"/>
    </source>
</evidence>
<evidence type="ECO:0007829" key="12">
    <source>
        <dbReference type="PDB" id="1U9M"/>
    </source>
</evidence>
<proteinExistence type="evidence at protein level"/>
<comment type="function">
    <text>Cytochrome b5 is a membrane-bound hemoprotein functioning as an electron carrier for several membrane-bound oxygenases.</text>
</comment>
<comment type="subcellular location">
    <subcellularLocation>
        <location>Endoplasmic reticulum membrane</location>
        <topology>Single-pass membrane protein</topology>
        <orientation>Cytoplasmic side</orientation>
    </subcellularLocation>
    <subcellularLocation>
        <location>Microsome membrane</location>
        <topology>Single-pass membrane protein</topology>
        <orientation>Cytoplasmic side</orientation>
    </subcellularLocation>
</comment>
<comment type="similarity">
    <text evidence="8">Belongs to the cytochrome b5 family.</text>
</comment>
<accession>P00171</accession>
<accession>Q27947</accession>
<accession>Q28837</accession>
<accession>Q32PH5</accession>
<organism>
    <name type="scientific">Bos taurus</name>
    <name type="common">Bovine</name>
    <dbReference type="NCBI Taxonomy" id="9913"/>
    <lineage>
        <taxon>Eukaryota</taxon>
        <taxon>Metazoa</taxon>
        <taxon>Chordata</taxon>
        <taxon>Craniata</taxon>
        <taxon>Vertebrata</taxon>
        <taxon>Euteleostomi</taxon>
        <taxon>Mammalia</taxon>
        <taxon>Eutheria</taxon>
        <taxon>Laurasiatheria</taxon>
        <taxon>Artiodactyla</taxon>
        <taxon>Ruminantia</taxon>
        <taxon>Pecora</taxon>
        <taxon>Bovidae</taxon>
        <taxon>Bovinae</taxon>
        <taxon>Bos</taxon>
    </lineage>
</organism>
<name>CYB5_BOVIN</name>
<reference key="1">
    <citation type="journal article" date="1989" name="Nucleic Acids Res.">
        <title>The complete nucleotide sequence of bovine liver cytochrome b5 mRNA.</title>
        <authorList>
            <person name="Cristiano R.J."/>
            <person name="Steggles A.W."/>
        </authorList>
    </citation>
    <scope>NUCLEOTIDE SEQUENCE [MRNA]</scope>
</reference>
<reference key="2">
    <citation type="journal article" date="1993" name="Genomics">
        <title>The isolation and characterization of the bovine cytochrome b5 gene, and a transcribed pseudogene.</title>
        <authorList>
            <person name="Cristiano R.J."/>
            <person name="Giordano S.J."/>
            <person name="Steggles A.W."/>
        </authorList>
    </citation>
    <scope>NUCLEOTIDE SEQUENCE [GENOMIC DNA]</scope>
    <source>
        <tissue>Liver</tissue>
    </source>
</reference>
<reference key="3">
    <citation type="submission" date="2005-10" db="EMBL/GenBank/DDBJ databases">
        <authorList>
            <consortium name="NIH - Mammalian Gene Collection (MGC) project"/>
        </authorList>
    </citation>
    <scope>NUCLEOTIDE SEQUENCE [LARGE SCALE MRNA]</scope>
    <source>
        <strain>Hereford</strain>
        <tissue>Fetal liver</tissue>
    </source>
</reference>
<reference key="4">
    <citation type="journal article" date="1985" name="J. Biochem.">
        <title>Amino acid sequences of cytochrome b5 from human, porcine, and bovine erythrocytes and comparison with liver microsomal cytochrome b5.</title>
        <authorList>
            <person name="Abe K."/>
            <person name="Kimura S."/>
            <person name="Kizawa R."/>
            <person name="Anan F.K."/>
            <person name="Sugita Y."/>
        </authorList>
    </citation>
    <scope>PROTEIN SEQUENCE OF 2-98</scope>
    <scope>ACETYLATION AT ALA-2</scope>
    <source>
        <tissue>Erythrocyte</tissue>
    </source>
</reference>
<reference key="5">
    <citation type="journal article" date="1974" name="Biochemistry">
        <title>Cytochrome b5 from microsomal membranes of equine, bovine, and porcine livers. Isolation and properties of preparations containing the membranous segment.</title>
        <authorList>
            <person name="Ozols J."/>
        </authorList>
    </citation>
    <scope>PROTEIN SEQUENCE OF 2-11 AND 131-134</scope>
</reference>
<reference key="6">
    <citation type="journal article" date="1989" name="Biochim. Biophys. Acta">
        <title>Structure of cytochrome b5 and its topology in the microsomal membrane.</title>
        <authorList>
            <person name="Ozols J."/>
        </authorList>
    </citation>
    <scope>PROTEIN SEQUENCE OF 2-6 AND 15-18</scope>
    <scope>ACETYLATION AT ALA-2</scope>
</reference>
<reference key="7">
    <citation type="journal article" date="1969" name="J. Biol. Chem.">
        <title>Correction of the amino acid sequence of calf liver microsomal cytochrome b5.</title>
        <authorList>
            <person name="Ozols J."/>
            <person name="Strittmatter P."/>
        </authorList>
    </citation>
    <scope>PROTEIN SEQUENCE OF 6-98</scope>
</reference>
<reference key="8">
    <citation type="journal article" date="1970" name="Proc. Natl. Acad. Sci. U.S.A.">
        <title>Comparative study of the primary structures of cytochrome b5 from four species.</title>
        <authorList>
            <person name="Tsugita A."/>
            <person name="Kobayashi M."/>
            <person name="Tani S."/>
            <person name="Kyo S."/>
            <person name="Rashid M.A."/>
            <person name="Yoshida Y."/>
            <person name="Kajihara T."/>
            <person name="Hagihara B."/>
        </authorList>
    </citation>
    <scope>PROTEIN SEQUENCE OF 6-96</scope>
</reference>
<reference key="9">
    <citation type="journal article" date="1978" name="J. Biol. Chem.">
        <title>The primary structure of the nonpolar segment of bovine cytochrome b5.</title>
        <authorList>
            <person name="Fleming P.J."/>
            <person name="Dailey H.A."/>
            <person name="Corcoran D."/>
            <person name="Strittmatter P."/>
        </authorList>
    </citation>
    <scope>PROTEIN SEQUENCE OF 92-134</scope>
</reference>
<reference key="10">
    <citation type="journal article" date="1971" name="Cold Spring Harb. Symp. Quant. Biol.">
        <title>The structure of cytochrome b-5 at 2.0-A resolution.</title>
        <authorList>
            <person name="Mathews F.S."/>
            <person name="Argos P."/>
            <person name="Levine M."/>
        </authorList>
    </citation>
    <scope>X-RAY CRYSTALLOGRAPHY (2.0 ANGSTROMS) OF OXIDIZED FORM</scope>
</reference>
<reference key="11">
    <citation type="journal article" date="1975" name="J. Biol. Chem.">
        <title>The structure of ferrocytochrome b5 at 2.8-A resolution.</title>
        <authorList>
            <person name="Argos P."/>
            <person name="Mathews F.S."/>
        </authorList>
    </citation>
    <scope>X-RAY CRYSTALLOGRAPHY (2.8 ANGSTROMS) OF REDUCED FORM</scope>
</reference>
<reference key="12">
    <citation type="journal article" date="1996" name="Acta Crystallogr. D">
        <title>Refinement and structural analysis of bovine cytochrome b5 at 1.5-A resolution.</title>
        <authorList>
            <person name="Durley R.C.E."/>
            <person name="Mathews F.S."/>
        </authorList>
    </citation>
    <scope>X-RAY CRYSTALLOGRAPHY (1.5 ANGSTROMS)</scope>
</reference>
<reference key="13">
    <citation type="journal article" date="2000" name="Proteins">
        <title>Crystal structure of recombinant trypsin-solubilized fragment of cytochrome b5 and the structural comparison with Val61His mutant.</title>
        <authorList>
            <person name="Wu J."/>
            <person name="Gan J.-H."/>
            <person name="Xia Z.-X."/>
            <person name="Wang Y.-H."/>
            <person name="Wang W.-H."/>
            <person name="Xue L.-L."/>
            <person name="Xie Y."/>
            <person name="Huang Z.-X."/>
        </authorList>
    </citation>
    <scope>X-RAY CRYSTALLOGRAPHY (1.9 ANGSTROMS) OF 8-89</scope>
    <scope>MUTAGENESIS</scope>
</reference>
<reference key="14">
    <citation type="journal article" date="2002" name="Acta Crystallogr. D">
        <title>Structures of V45E and V45Y mutants and structure comparison of a variety of cytochrome b5 mutants.</title>
        <authorList>
            <person name="Gan J.-H."/>
            <person name="Wu J."/>
            <person name="Wang Z.-Q."/>
            <person name="Wang Y.-H."/>
            <person name="Huang Z.-X."/>
            <person name="Xia Z.-X."/>
        </authorList>
    </citation>
    <scope>X-RAY CRYSTALLOGRAPHY (1.8 ANGSTROMS) OF 8-89</scope>
    <scope>MUTAGENESIS</scope>
</reference>
<reference key="15">
    <citation type="journal article" date="2002" name="Eur. J. Biochem.">
        <title>X-ray crystallography, CD and kinetic studies revealed the essence of the abnormal behaviors of the cytochrome b5 Phe35-&gt;Tyr mutant.</title>
        <authorList>
            <person name="Yao P."/>
            <person name="Wu J."/>
            <person name="Wang Y.-H."/>
            <person name="Sun B.-Y."/>
            <person name="Xia Z.-X."/>
            <person name="Huang Z.-X."/>
        </authorList>
    </citation>
    <scope>X-RAY CRYSTALLOGRAPHY (1.8 ANGSTROMS) OF 8-89</scope>
    <scope>CIRCULAR DICHROISM ANALYSIS</scope>
    <scope>MUTAGENESIS</scope>
</reference>
<reference key="16">
    <citation type="journal article" date="1996" name="J. Mol. Biol.">
        <title>The solution structure of bovine ferricytochrome b5 determined using heteronuclear NMR methods.</title>
        <authorList>
            <person name="Muskett F.W."/>
            <person name="Kelly G.P."/>
            <person name="Whitford D."/>
        </authorList>
    </citation>
    <scope>STRUCTURE BY NMR</scope>
</reference>
<reference key="17">
    <citation type="journal article" date="2001" name="Eur. J. Biochem.">
        <title>Solution structure of cytochrome b5 mutant (E44/48/56A/D60A) and its interaction with cytochrome c.</title>
        <authorList>
            <person name="Wu Y."/>
            <person name="Wang Y."/>
            <person name="Qian C."/>
            <person name="Lu J."/>
            <person name="Li E."/>
            <person name="Wang W."/>
            <person name="Lu J."/>
            <person name="Xie Y."/>
            <person name="Wang J."/>
            <person name="Zhu D."/>
            <person name="Huang Z."/>
            <person name="Tang W."/>
        </authorList>
    </citation>
    <scope>STRUCTURE BY NMR OF 8-89</scope>
    <scope>MUTAGENESIS</scope>
</reference>
<reference key="18">
    <citation type="journal article" date="2001" name="Protein Sci.">
        <title>Effects of charged amino-acid mutation on the solution structure of cytochrome b5 and binding between cytochrome b5 and cytochrome c.</title>
        <authorList>
            <person name="Qian C."/>
            <person name="Yao Y."/>
            <person name="Ye K."/>
            <person name="Wang J."/>
            <person name="Tang W."/>
            <person name="Wang Y."/>
            <person name="Wang W."/>
            <person name="Lu J."/>
            <person name="Xie Y."/>
            <person name="Huang Z."/>
        </authorList>
    </citation>
    <scope>STRUCTURE BY NMR OF 8-89</scope>
    <scope>MUTAGENESIS</scope>
</reference>
<reference key="19">
    <citation type="journal article" date="2003" name="Biochem. Biophys. Res. Commun.">
        <title>The solution structure of the oxidized bovine microsomal cytochrome b5 mutant V61H.</title>
        <authorList>
            <person name="Cao C."/>
            <person name="Zhang Q."/>
            <person name="Xue L.-L."/>
            <person name="Ma J."/>
            <person name="Wang Y.-H."/>
            <person name="Wu H."/>
            <person name="Huang Z.-X."/>
        </authorList>
    </citation>
    <scope>STRUCTURE BY NMR OF 8-89</scope>
    <scope>MUTAGENESIS</scope>
</reference>